<proteinExistence type="inferred from homology"/>
<reference key="1">
    <citation type="journal article" date="2001" name="Science">
        <title>The genome of the natural genetic engineer Agrobacterium tumefaciens C58.</title>
        <authorList>
            <person name="Wood D.W."/>
            <person name="Setubal J.C."/>
            <person name="Kaul R."/>
            <person name="Monks D.E."/>
            <person name="Kitajima J.P."/>
            <person name="Okura V.K."/>
            <person name="Zhou Y."/>
            <person name="Chen L."/>
            <person name="Wood G.E."/>
            <person name="Almeida N.F. Jr."/>
            <person name="Woo L."/>
            <person name="Chen Y."/>
            <person name="Paulsen I.T."/>
            <person name="Eisen J.A."/>
            <person name="Karp P.D."/>
            <person name="Bovee D. Sr."/>
            <person name="Chapman P."/>
            <person name="Clendenning J."/>
            <person name="Deatherage G."/>
            <person name="Gillet W."/>
            <person name="Grant C."/>
            <person name="Kutyavin T."/>
            <person name="Levy R."/>
            <person name="Li M.-J."/>
            <person name="McClelland E."/>
            <person name="Palmieri A."/>
            <person name="Raymond C."/>
            <person name="Rouse G."/>
            <person name="Saenphimmachak C."/>
            <person name="Wu Z."/>
            <person name="Romero P."/>
            <person name="Gordon D."/>
            <person name="Zhang S."/>
            <person name="Yoo H."/>
            <person name="Tao Y."/>
            <person name="Biddle P."/>
            <person name="Jung M."/>
            <person name="Krespan W."/>
            <person name="Perry M."/>
            <person name="Gordon-Kamm B."/>
            <person name="Liao L."/>
            <person name="Kim S."/>
            <person name="Hendrick C."/>
            <person name="Zhao Z.-Y."/>
            <person name="Dolan M."/>
            <person name="Chumley F."/>
            <person name="Tingey S.V."/>
            <person name="Tomb J.-F."/>
            <person name="Gordon M.P."/>
            <person name="Olson M.V."/>
            <person name="Nester E.W."/>
        </authorList>
    </citation>
    <scope>NUCLEOTIDE SEQUENCE [LARGE SCALE GENOMIC DNA]</scope>
    <source>
        <strain>C58 / ATCC 33970</strain>
    </source>
</reference>
<reference key="2">
    <citation type="journal article" date="2001" name="Science">
        <title>Genome sequence of the plant pathogen and biotechnology agent Agrobacterium tumefaciens C58.</title>
        <authorList>
            <person name="Goodner B."/>
            <person name="Hinkle G."/>
            <person name="Gattung S."/>
            <person name="Miller N."/>
            <person name="Blanchard M."/>
            <person name="Qurollo B."/>
            <person name="Goldman B.S."/>
            <person name="Cao Y."/>
            <person name="Askenazi M."/>
            <person name="Halling C."/>
            <person name="Mullin L."/>
            <person name="Houmiel K."/>
            <person name="Gordon J."/>
            <person name="Vaudin M."/>
            <person name="Iartchouk O."/>
            <person name="Epp A."/>
            <person name="Liu F."/>
            <person name="Wollam C."/>
            <person name="Allinger M."/>
            <person name="Doughty D."/>
            <person name="Scott C."/>
            <person name="Lappas C."/>
            <person name="Markelz B."/>
            <person name="Flanagan C."/>
            <person name="Crowell C."/>
            <person name="Gurson J."/>
            <person name="Lomo C."/>
            <person name="Sear C."/>
            <person name="Strub G."/>
            <person name="Cielo C."/>
            <person name="Slater S."/>
        </authorList>
    </citation>
    <scope>NUCLEOTIDE SEQUENCE [LARGE SCALE GENOMIC DNA]</scope>
    <source>
        <strain>C58 / ATCC 33970</strain>
    </source>
</reference>
<sequence length="149" mass="17059">MKSTLRISLKSGEKIFINGAVLRVDRKVALEFLNDVTFLLENHVLQPDQATTPLRQLYFIAQMILINPEGREQSTNMFRKSVSMLLNCFQHDEILAELKRIDGLVASGKAFEALKAIRGLYTIEEKILSNQEMTPATIEQIRKEIAPWR</sequence>
<organism>
    <name type="scientific">Agrobacterium fabrum (strain C58 / ATCC 33970)</name>
    <name type="common">Agrobacterium tumefaciens (strain C58)</name>
    <dbReference type="NCBI Taxonomy" id="176299"/>
    <lineage>
        <taxon>Bacteria</taxon>
        <taxon>Pseudomonadati</taxon>
        <taxon>Pseudomonadota</taxon>
        <taxon>Alphaproteobacteria</taxon>
        <taxon>Hyphomicrobiales</taxon>
        <taxon>Rhizobiaceae</taxon>
        <taxon>Rhizobium/Agrobacterium group</taxon>
        <taxon>Agrobacterium</taxon>
        <taxon>Agrobacterium tumefaciens complex</taxon>
    </lineage>
</organism>
<accession>Q8UHV1</accession>
<keyword id="KW-1005">Bacterial flagellum biogenesis</keyword>
<keyword id="KW-1185">Reference proteome</keyword>
<keyword id="KW-0678">Repressor</keyword>
<keyword id="KW-0694">RNA-binding</keyword>
<dbReference type="EMBL" id="AE007869">
    <property type="protein sequence ID" value="AAK86389.1"/>
    <property type="molecule type" value="Genomic_DNA"/>
</dbReference>
<dbReference type="PIR" id="AE2647">
    <property type="entry name" value="AE2647"/>
</dbReference>
<dbReference type="PIR" id="D97429">
    <property type="entry name" value="D97429"/>
</dbReference>
<dbReference type="RefSeq" id="NP_353604.1">
    <property type="nucleotide sequence ID" value="NC_003062.2"/>
</dbReference>
<dbReference type="RefSeq" id="WP_006313043.1">
    <property type="nucleotide sequence ID" value="NC_003062.2"/>
</dbReference>
<dbReference type="STRING" id="176299.Atu0578"/>
<dbReference type="EnsemblBacteria" id="AAK86389">
    <property type="protein sequence ID" value="AAK86389"/>
    <property type="gene ID" value="Atu0578"/>
</dbReference>
<dbReference type="GeneID" id="1132616"/>
<dbReference type="KEGG" id="atu:Atu0578"/>
<dbReference type="PATRIC" id="fig|176299.10.peg.573"/>
<dbReference type="eggNOG" id="COG5443">
    <property type="taxonomic scope" value="Bacteria"/>
</dbReference>
<dbReference type="HOGENOM" id="CLU_130913_1_0_5"/>
<dbReference type="OrthoDB" id="7932924at2"/>
<dbReference type="PhylomeDB" id="Q8UHV1"/>
<dbReference type="BioCyc" id="AGRO:ATU0578-MONOMER"/>
<dbReference type="Proteomes" id="UP000000813">
    <property type="component" value="Chromosome circular"/>
</dbReference>
<dbReference type="GO" id="GO:0048027">
    <property type="term" value="F:mRNA 5'-UTR binding"/>
    <property type="evidence" value="ECO:0007669"/>
    <property type="project" value="UniProtKB-UniRule"/>
</dbReference>
<dbReference type="GO" id="GO:0044781">
    <property type="term" value="P:bacterial-type flagellum organization"/>
    <property type="evidence" value="ECO:0007669"/>
    <property type="project" value="UniProtKB-KW"/>
</dbReference>
<dbReference type="GO" id="GO:0006402">
    <property type="term" value="P:mRNA catabolic process"/>
    <property type="evidence" value="ECO:0007669"/>
    <property type="project" value="InterPro"/>
</dbReference>
<dbReference type="GO" id="GO:1902209">
    <property type="term" value="P:negative regulation of bacterial-type flagellum assembly"/>
    <property type="evidence" value="ECO:0007669"/>
    <property type="project" value="UniProtKB-UniRule"/>
</dbReference>
<dbReference type="HAMAP" id="MF_00783">
    <property type="entry name" value="FlbT"/>
    <property type="match status" value="1"/>
</dbReference>
<dbReference type="InterPro" id="IPR009967">
    <property type="entry name" value="Flagellum_FlbT"/>
</dbReference>
<dbReference type="NCBIfam" id="NF001995">
    <property type="entry name" value="PRK00794.1-1"/>
    <property type="match status" value="1"/>
</dbReference>
<dbReference type="Pfam" id="PF07378">
    <property type="entry name" value="FlbT"/>
    <property type="match status" value="1"/>
</dbReference>
<dbReference type="PIRSF" id="PIRSF009533">
    <property type="entry name" value="FlbT"/>
    <property type="match status" value="1"/>
</dbReference>
<feature type="chain" id="PRO_0000217150" description="Probable flagellum biosynthesis repressor protein FlbT">
    <location>
        <begin position="1"/>
        <end position="149"/>
    </location>
</feature>
<evidence type="ECO:0000255" key="1">
    <source>
        <dbReference type="HAMAP-Rule" id="MF_00783"/>
    </source>
</evidence>
<gene>
    <name evidence="1" type="primary">flbT</name>
    <name type="ordered locus">Atu0578</name>
    <name type="ORF">AGR_C_1018</name>
</gene>
<protein>
    <recommendedName>
        <fullName evidence="1">Probable flagellum biosynthesis repressor protein FlbT</fullName>
    </recommendedName>
</protein>
<name>FLBT_AGRFC</name>
<comment type="function">
    <text evidence="1">Has a post-transcriptional repressor function in flagellum biogenesis. Associates with the 5'-UTR of fljK mRNA and promotes its degradation.</text>
</comment>
<comment type="similarity">
    <text evidence="1">Belongs to the FlbT family.</text>
</comment>